<proteinExistence type="inferred from homology"/>
<comment type="function">
    <text evidence="1">Responsible for synthesis of pseudouridine from uracil-54 and uracil-55 in the psi GC loop of transfer RNAs.</text>
</comment>
<comment type="catalytic activity">
    <reaction evidence="1">
        <text>uridine(54) in tRNA = pseudouridine(54) in tRNA</text>
        <dbReference type="Rhea" id="RHEA:57876"/>
        <dbReference type="Rhea" id="RHEA-COMP:10193"/>
        <dbReference type="Rhea" id="RHEA-COMP:14141"/>
        <dbReference type="ChEBI" id="CHEBI:65314"/>
        <dbReference type="ChEBI" id="CHEBI:65315"/>
    </reaction>
</comment>
<comment type="catalytic activity">
    <reaction evidence="1">
        <text>uridine(55) in tRNA = pseudouridine(55) in tRNA</text>
        <dbReference type="Rhea" id="RHEA:42532"/>
        <dbReference type="Rhea" id="RHEA-COMP:10101"/>
        <dbReference type="Rhea" id="RHEA-COMP:10102"/>
        <dbReference type="ChEBI" id="CHEBI:65314"/>
        <dbReference type="ChEBI" id="CHEBI:65315"/>
        <dbReference type="EC" id="5.4.99.25"/>
    </reaction>
</comment>
<comment type="similarity">
    <text evidence="1">Belongs to the pseudouridine synthase Pus10 family.</text>
</comment>
<evidence type="ECO:0000255" key="1">
    <source>
        <dbReference type="HAMAP-Rule" id="MF_01893"/>
    </source>
</evidence>
<organism>
    <name type="scientific">Thermosphaera aggregans (strain DSM 11486 / M11TL)</name>
    <dbReference type="NCBI Taxonomy" id="633148"/>
    <lineage>
        <taxon>Archaea</taxon>
        <taxon>Thermoproteota</taxon>
        <taxon>Thermoprotei</taxon>
        <taxon>Desulfurococcales</taxon>
        <taxon>Desulfurococcaceae</taxon>
        <taxon>Thermosphaera</taxon>
    </lineage>
</organism>
<feature type="chain" id="PRO_0000407399" description="tRNA pseudouridine synthase Pus10">
    <location>
        <begin position="1"/>
        <end position="441"/>
    </location>
</feature>
<feature type="active site" description="Nucleophile" evidence="1">
    <location>
        <position position="268"/>
    </location>
</feature>
<feature type="binding site" evidence="1">
    <location>
        <position position="333"/>
    </location>
    <ligand>
        <name>substrate</name>
    </ligand>
</feature>
<feature type="binding site" evidence="1">
    <location>
        <position position="405"/>
    </location>
    <ligand>
        <name>substrate</name>
    </ligand>
</feature>
<name>PUS10_THEAM</name>
<accession>D5TZL3</accession>
<keyword id="KW-0413">Isomerase</keyword>
<keyword id="KW-1185">Reference proteome</keyword>
<keyword id="KW-0694">RNA-binding</keyword>
<keyword id="KW-0819">tRNA processing</keyword>
<reference key="1">
    <citation type="journal article" date="2010" name="Stand. Genomic Sci.">
        <title>Complete genome sequence of Thermosphaera aggregans type strain (M11TLT).</title>
        <authorList>
            <person name="Spring S."/>
            <person name="Rachel R."/>
            <person name="Lapidus A."/>
            <person name="Davenport K."/>
            <person name="Tice H."/>
            <person name="Copeland A."/>
            <person name="Cheng J.-F."/>
            <person name="Lucas S."/>
            <person name="Chen F."/>
            <person name="Nolan M."/>
            <person name="Bruce D."/>
            <person name="Goodwin L."/>
            <person name="Pitluck S."/>
            <person name="Ivanova N."/>
            <person name="Mavromatis K."/>
            <person name="Ovchinnikova G."/>
            <person name="Pati A."/>
            <person name="Chen A."/>
            <person name="Palaniappan K."/>
            <person name="Land M."/>
            <person name="Hauser L."/>
            <person name="Chang Y.-J."/>
            <person name="Jeffries C.C."/>
            <person name="Brettin T."/>
            <person name="Detter J.C."/>
            <person name="Tapia R."/>
            <person name="Han C."/>
            <person name="Heimerl T."/>
            <person name="Weikl F."/>
            <person name="Brambilla E."/>
            <person name="Goker M."/>
            <person name="Bristow J."/>
            <person name="Eisen J.A."/>
            <person name="Markowitz V."/>
            <person name="Hugenholtz P."/>
            <person name="Kyrpides N.C."/>
            <person name="Klenk H.-P."/>
        </authorList>
    </citation>
    <scope>NUCLEOTIDE SEQUENCE [LARGE SCALE GENOMIC DNA]</scope>
    <source>
        <strain>DSM 11486 / M11TL</strain>
    </source>
</reference>
<dbReference type="EC" id="5.4.99.25" evidence="1"/>
<dbReference type="EMBL" id="CP001939">
    <property type="protein sequence ID" value="ADG90313.1"/>
    <property type="molecule type" value="Genomic_DNA"/>
</dbReference>
<dbReference type="RefSeq" id="WP_013128906.1">
    <property type="nucleotide sequence ID" value="NC_014160.1"/>
</dbReference>
<dbReference type="SMR" id="D5TZL3"/>
<dbReference type="STRING" id="633148.Tagg_0031"/>
<dbReference type="GeneID" id="9165037"/>
<dbReference type="KEGG" id="tag:Tagg_0031"/>
<dbReference type="eggNOG" id="arCOG01015">
    <property type="taxonomic scope" value="Archaea"/>
</dbReference>
<dbReference type="HOGENOM" id="CLU_028780_2_0_2"/>
<dbReference type="OrthoDB" id="10348at2157"/>
<dbReference type="Proteomes" id="UP000002376">
    <property type="component" value="Chromosome"/>
</dbReference>
<dbReference type="GO" id="GO:0000049">
    <property type="term" value="F:tRNA binding"/>
    <property type="evidence" value="ECO:0007669"/>
    <property type="project" value="InterPro"/>
</dbReference>
<dbReference type="GO" id="GO:0160148">
    <property type="term" value="F:tRNA pseudouridine(55) synthase activity"/>
    <property type="evidence" value="ECO:0007669"/>
    <property type="project" value="UniProtKB-EC"/>
</dbReference>
<dbReference type="GO" id="GO:0031119">
    <property type="term" value="P:tRNA pseudouridine synthesis"/>
    <property type="evidence" value="ECO:0007669"/>
    <property type="project" value="UniProtKB-UniRule"/>
</dbReference>
<dbReference type="Gene3D" id="3.30.70.2510">
    <property type="match status" value="1"/>
</dbReference>
<dbReference type="Gene3D" id="3.30.70.3190">
    <property type="match status" value="1"/>
</dbReference>
<dbReference type="HAMAP" id="MF_01893">
    <property type="entry name" value="Pus10_arch"/>
    <property type="match status" value="1"/>
</dbReference>
<dbReference type="InterPro" id="IPR020103">
    <property type="entry name" value="PsdUridine_synth_cat_dom_sf"/>
</dbReference>
<dbReference type="InterPro" id="IPR005912">
    <property type="entry name" value="Pus10"/>
</dbReference>
<dbReference type="InterPro" id="IPR039894">
    <property type="entry name" value="Pus10-like"/>
</dbReference>
<dbReference type="InterPro" id="IPR048741">
    <property type="entry name" value="Pus10-like_C"/>
</dbReference>
<dbReference type="InterPro" id="IPR055174">
    <property type="entry name" value="Pus10_THUMP_arc"/>
</dbReference>
<dbReference type="NCBIfam" id="TIGR01213">
    <property type="entry name" value="pseudo_Pus10arc"/>
    <property type="match status" value="1"/>
</dbReference>
<dbReference type="PANTHER" id="PTHR21568">
    <property type="entry name" value="TRNA PSEUDOURIDINE SYNTHASE PUS10"/>
    <property type="match status" value="1"/>
</dbReference>
<dbReference type="PANTHER" id="PTHR21568:SF0">
    <property type="entry name" value="TRNA PSEUDOURIDINE SYNTHASE PUS10"/>
    <property type="match status" value="1"/>
</dbReference>
<dbReference type="Pfam" id="PF21238">
    <property type="entry name" value="Pus10_C"/>
    <property type="match status" value="1"/>
</dbReference>
<dbReference type="Pfam" id="PF22023">
    <property type="entry name" value="Pus10_THUMP_arc"/>
    <property type="match status" value="1"/>
</dbReference>
<dbReference type="SUPFAM" id="SSF55120">
    <property type="entry name" value="Pseudouridine synthase"/>
    <property type="match status" value="1"/>
</dbReference>
<gene>
    <name evidence="1" type="primary">pus10</name>
    <name type="ordered locus">Tagg_0031</name>
</gene>
<protein>
    <recommendedName>
        <fullName evidence="1">tRNA pseudouridine synthase Pus10</fullName>
        <ecNumber evidence="1">5.4.99.25</ecNumber>
    </recommendedName>
    <alternativeName>
        <fullName evidence="1">tRNA pseudouridine 54/55 synthase</fullName>
        <shortName evidence="1">Psi54/55 synthase</shortName>
    </alternativeName>
</protein>
<sequence>MGGSSISTPLDFNKIVEDVEKTLSKYPLCDHCLGRFFAKYGLGLSNRERGSSLKTMLGFKLYDDYSSKRIGRDSLLALAENAGEPLTRMVEKLFAENVNPKTCFICGGRISDEWLDSVAEAVYEKLKEASVTRFVVGVKLGRNLREKELQLVTETGFTRAESLKNEIKREVGKKVMAKYGLVPDFEKPEATAIVKLDENFNYRVELVITPVLLKGVYNKRGRNISHVPWLAKQGGRKYPLSIQEYLESRLADPFKAKKVKIHAAGREDVDARTLGPGRPLVIEIVEPLVRSYDIEDVNKLIRSDLVEVRVHKPASRRDIELLKQTSREKRKVYRLLVVSSTPISEAQLNELEAYFNDIAIQQRTPIRILTRKKDVLRVRKVYEVRTKPVSSTSFEALVYCDGGLYVKELVHCDQGRTNPCFASILNTELKPVELDVLYIEH</sequence>